<feature type="chain" id="PRO_1000016103" description="Aspartyl/glutamyl-tRNA(Asn/Gln) amidotransferase subunit C">
    <location>
        <begin position="1"/>
        <end position="95"/>
    </location>
</feature>
<evidence type="ECO:0000255" key="1">
    <source>
        <dbReference type="HAMAP-Rule" id="MF_00122"/>
    </source>
</evidence>
<accession>Q3ATT4</accession>
<sequence length="95" mass="10829">MSVTIKDVTYIAELAKLRFSEPEMETMTNELNNILHYIAKLDEINTDGIQPLSGIYDPVNVLREDVELQPLTSSEVLHNAPDRQDRFFKVPKVIG</sequence>
<organism>
    <name type="scientific">Chlorobium chlorochromatii (strain CaD3)</name>
    <dbReference type="NCBI Taxonomy" id="340177"/>
    <lineage>
        <taxon>Bacteria</taxon>
        <taxon>Pseudomonadati</taxon>
        <taxon>Chlorobiota</taxon>
        <taxon>Chlorobiia</taxon>
        <taxon>Chlorobiales</taxon>
        <taxon>Chlorobiaceae</taxon>
        <taxon>Chlorobium/Pelodictyon group</taxon>
        <taxon>Chlorobium</taxon>
    </lineage>
</organism>
<protein>
    <recommendedName>
        <fullName evidence="1">Aspartyl/glutamyl-tRNA(Asn/Gln) amidotransferase subunit C</fullName>
        <shortName evidence="1">Asp/Glu-ADT subunit C</shortName>
        <ecNumber evidence="1">6.3.5.-</ecNumber>
    </recommendedName>
</protein>
<dbReference type="EC" id="6.3.5.-" evidence="1"/>
<dbReference type="EMBL" id="CP000108">
    <property type="protein sequence ID" value="ABB27591.1"/>
    <property type="molecule type" value="Genomic_DNA"/>
</dbReference>
<dbReference type="SMR" id="Q3ATT4"/>
<dbReference type="STRING" id="340177.Cag_0318"/>
<dbReference type="KEGG" id="cch:Cag_0318"/>
<dbReference type="eggNOG" id="COG0721">
    <property type="taxonomic scope" value="Bacteria"/>
</dbReference>
<dbReference type="HOGENOM" id="CLU_105899_1_2_10"/>
<dbReference type="OrthoDB" id="9813938at2"/>
<dbReference type="GO" id="GO:0050566">
    <property type="term" value="F:asparaginyl-tRNA synthase (glutamine-hydrolyzing) activity"/>
    <property type="evidence" value="ECO:0007669"/>
    <property type="project" value="RHEA"/>
</dbReference>
<dbReference type="GO" id="GO:0005524">
    <property type="term" value="F:ATP binding"/>
    <property type="evidence" value="ECO:0007669"/>
    <property type="project" value="UniProtKB-KW"/>
</dbReference>
<dbReference type="GO" id="GO:0050567">
    <property type="term" value="F:glutaminyl-tRNA synthase (glutamine-hydrolyzing) activity"/>
    <property type="evidence" value="ECO:0007669"/>
    <property type="project" value="UniProtKB-UniRule"/>
</dbReference>
<dbReference type="GO" id="GO:0070681">
    <property type="term" value="P:glutaminyl-tRNAGln biosynthesis via transamidation"/>
    <property type="evidence" value="ECO:0007669"/>
    <property type="project" value="TreeGrafter"/>
</dbReference>
<dbReference type="GO" id="GO:0006450">
    <property type="term" value="P:regulation of translational fidelity"/>
    <property type="evidence" value="ECO:0007669"/>
    <property type="project" value="InterPro"/>
</dbReference>
<dbReference type="GO" id="GO:0006412">
    <property type="term" value="P:translation"/>
    <property type="evidence" value="ECO:0007669"/>
    <property type="project" value="UniProtKB-UniRule"/>
</dbReference>
<dbReference type="Gene3D" id="1.10.20.60">
    <property type="entry name" value="Glu-tRNAGln amidotransferase C subunit, N-terminal domain"/>
    <property type="match status" value="1"/>
</dbReference>
<dbReference type="HAMAP" id="MF_00122">
    <property type="entry name" value="GatC"/>
    <property type="match status" value="1"/>
</dbReference>
<dbReference type="InterPro" id="IPR036113">
    <property type="entry name" value="Asp/Glu-ADT_sf_sub_c"/>
</dbReference>
<dbReference type="InterPro" id="IPR003837">
    <property type="entry name" value="GatC"/>
</dbReference>
<dbReference type="NCBIfam" id="TIGR00135">
    <property type="entry name" value="gatC"/>
    <property type="match status" value="1"/>
</dbReference>
<dbReference type="PANTHER" id="PTHR15004">
    <property type="entry name" value="GLUTAMYL-TRNA(GLN) AMIDOTRANSFERASE SUBUNIT C, MITOCHONDRIAL"/>
    <property type="match status" value="1"/>
</dbReference>
<dbReference type="PANTHER" id="PTHR15004:SF0">
    <property type="entry name" value="GLUTAMYL-TRNA(GLN) AMIDOTRANSFERASE SUBUNIT C, MITOCHONDRIAL"/>
    <property type="match status" value="1"/>
</dbReference>
<dbReference type="Pfam" id="PF02686">
    <property type="entry name" value="GatC"/>
    <property type="match status" value="1"/>
</dbReference>
<dbReference type="SUPFAM" id="SSF141000">
    <property type="entry name" value="Glu-tRNAGln amidotransferase C subunit"/>
    <property type="match status" value="1"/>
</dbReference>
<keyword id="KW-0067">ATP-binding</keyword>
<keyword id="KW-0436">Ligase</keyword>
<keyword id="KW-0547">Nucleotide-binding</keyword>
<keyword id="KW-0648">Protein biosynthesis</keyword>
<name>GATC_CHLCH</name>
<proteinExistence type="inferred from homology"/>
<comment type="function">
    <text evidence="1">Allows the formation of correctly charged Asn-tRNA(Asn) or Gln-tRNA(Gln) through the transamidation of misacylated Asp-tRNA(Asn) or Glu-tRNA(Gln) in organisms which lack either or both of asparaginyl-tRNA or glutaminyl-tRNA synthetases. The reaction takes place in the presence of glutamine and ATP through an activated phospho-Asp-tRNA(Asn) or phospho-Glu-tRNA(Gln).</text>
</comment>
<comment type="catalytic activity">
    <reaction evidence="1">
        <text>L-glutamyl-tRNA(Gln) + L-glutamine + ATP + H2O = L-glutaminyl-tRNA(Gln) + L-glutamate + ADP + phosphate + H(+)</text>
        <dbReference type="Rhea" id="RHEA:17521"/>
        <dbReference type="Rhea" id="RHEA-COMP:9681"/>
        <dbReference type="Rhea" id="RHEA-COMP:9684"/>
        <dbReference type="ChEBI" id="CHEBI:15377"/>
        <dbReference type="ChEBI" id="CHEBI:15378"/>
        <dbReference type="ChEBI" id="CHEBI:29985"/>
        <dbReference type="ChEBI" id="CHEBI:30616"/>
        <dbReference type="ChEBI" id="CHEBI:43474"/>
        <dbReference type="ChEBI" id="CHEBI:58359"/>
        <dbReference type="ChEBI" id="CHEBI:78520"/>
        <dbReference type="ChEBI" id="CHEBI:78521"/>
        <dbReference type="ChEBI" id="CHEBI:456216"/>
    </reaction>
</comment>
<comment type="catalytic activity">
    <reaction evidence="1">
        <text>L-aspartyl-tRNA(Asn) + L-glutamine + ATP + H2O = L-asparaginyl-tRNA(Asn) + L-glutamate + ADP + phosphate + 2 H(+)</text>
        <dbReference type="Rhea" id="RHEA:14513"/>
        <dbReference type="Rhea" id="RHEA-COMP:9674"/>
        <dbReference type="Rhea" id="RHEA-COMP:9677"/>
        <dbReference type="ChEBI" id="CHEBI:15377"/>
        <dbReference type="ChEBI" id="CHEBI:15378"/>
        <dbReference type="ChEBI" id="CHEBI:29985"/>
        <dbReference type="ChEBI" id="CHEBI:30616"/>
        <dbReference type="ChEBI" id="CHEBI:43474"/>
        <dbReference type="ChEBI" id="CHEBI:58359"/>
        <dbReference type="ChEBI" id="CHEBI:78515"/>
        <dbReference type="ChEBI" id="CHEBI:78516"/>
        <dbReference type="ChEBI" id="CHEBI:456216"/>
    </reaction>
</comment>
<comment type="subunit">
    <text evidence="1">Heterotrimer of A, B and C subunits.</text>
</comment>
<comment type="similarity">
    <text evidence="1">Belongs to the GatC family.</text>
</comment>
<reference key="1">
    <citation type="submission" date="2005-08" db="EMBL/GenBank/DDBJ databases">
        <title>Complete sequence of Chlorobium chlorochromatii CaD3.</title>
        <authorList>
            <consortium name="US DOE Joint Genome Institute"/>
            <person name="Copeland A."/>
            <person name="Lucas S."/>
            <person name="Lapidus A."/>
            <person name="Barry K."/>
            <person name="Detter J.C."/>
            <person name="Glavina T."/>
            <person name="Hammon N."/>
            <person name="Israni S."/>
            <person name="Pitluck S."/>
            <person name="Bryant D."/>
            <person name="Schmutz J."/>
            <person name="Larimer F."/>
            <person name="Land M."/>
            <person name="Kyrpides N."/>
            <person name="Ivanova N."/>
            <person name="Richardson P."/>
        </authorList>
    </citation>
    <scope>NUCLEOTIDE SEQUENCE [LARGE SCALE GENOMIC DNA]</scope>
    <source>
        <strain>CaD3</strain>
    </source>
</reference>
<gene>
    <name evidence="1" type="primary">gatC</name>
    <name type="ordered locus">Cag_0318</name>
</gene>